<comment type="function">
    <text evidence="1">Catalyzes the transfer of the diacylglyceryl group from phosphatidylglycerol to the sulfhydryl group of the N-terminal cysteine of a prolipoprotein, the first step in the formation of mature lipoproteins.</text>
</comment>
<comment type="catalytic activity">
    <reaction evidence="1">
        <text>L-cysteinyl-[prolipoprotein] + a 1,2-diacyl-sn-glycero-3-phospho-(1'-sn-glycerol) = an S-1,2-diacyl-sn-glyceryl-L-cysteinyl-[prolipoprotein] + sn-glycerol 1-phosphate + H(+)</text>
        <dbReference type="Rhea" id="RHEA:56712"/>
        <dbReference type="Rhea" id="RHEA-COMP:14679"/>
        <dbReference type="Rhea" id="RHEA-COMP:14680"/>
        <dbReference type="ChEBI" id="CHEBI:15378"/>
        <dbReference type="ChEBI" id="CHEBI:29950"/>
        <dbReference type="ChEBI" id="CHEBI:57685"/>
        <dbReference type="ChEBI" id="CHEBI:64716"/>
        <dbReference type="ChEBI" id="CHEBI:140658"/>
        <dbReference type="EC" id="2.5.1.145"/>
    </reaction>
</comment>
<comment type="pathway">
    <text evidence="1">Protein modification; lipoprotein biosynthesis (diacylglyceryl transfer).</text>
</comment>
<comment type="subcellular location">
    <subcellularLocation>
        <location evidence="1">Cell inner membrane</location>
        <topology evidence="1">Multi-pass membrane protein</topology>
    </subcellularLocation>
</comment>
<comment type="similarity">
    <text evidence="1">Belongs to the Lgt family.</text>
</comment>
<reference key="1">
    <citation type="journal article" date="2000" name="Nature">
        <title>Complete genome sequence of Pseudomonas aeruginosa PAO1, an opportunistic pathogen.</title>
        <authorList>
            <person name="Stover C.K."/>
            <person name="Pham X.-Q.T."/>
            <person name="Erwin A.L."/>
            <person name="Mizoguchi S.D."/>
            <person name="Warrener P."/>
            <person name="Hickey M.J."/>
            <person name="Brinkman F.S.L."/>
            <person name="Hufnagle W.O."/>
            <person name="Kowalik D.J."/>
            <person name="Lagrou M."/>
            <person name="Garber R.L."/>
            <person name="Goltry L."/>
            <person name="Tolentino E."/>
            <person name="Westbrock-Wadman S."/>
            <person name="Yuan Y."/>
            <person name="Brody L.L."/>
            <person name="Coulter S.N."/>
            <person name="Folger K.R."/>
            <person name="Kas A."/>
            <person name="Larbig K."/>
            <person name="Lim R.M."/>
            <person name="Smith K.A."/>
            <person name="Spencer D.H."/>
            <person name="Wong G.K.-S."/>
            <person name="Wu Z."/>
            <person name="Paulsen I.T."/>
            <person name="Reizer J."/>
            <person name="Saier M.H. Jr."/>
            <person name="Hancock R.E.W."/>
            <person name="Lory S."/>
            <person name="Olson M.V."/>
        </authorList>
    </citation>
    <scope>NUCLEOTIDE SEQUENCE [LARGE SCALE GENOMIC DNA]</scope>
    <source>
        <strain>ATCC 15692 / DSM 22644 / CIP 104116 / JCM 14847 / LMG 12228 / 1C / PRS 101 / PAO1</strain>
    </source>
</reference>
<accession>Q9I6F2</accession>
<gene>
    <name evidence="1" type="primary">lgt</name>
    <name type="ordered locus">PA0341</name>
</gene>
<protein>
    <recommendedName>
        <fullName evidence="1">Phosphatidylglycerol--prolipoprotein diacylglyceryl transferase</fullName>
        <ecNumber evidence="1">2.5.1.145</ecNumber>
    </recommendedName>
</protein>
<keyword id="KW-0997">Cell inner membrane</keyword>
<keyword id="KW-1003">Cell membrane</keyword>
<keyword id="KW-0472">Membrane</keyword>
<keyword id="KW-1185">Reference proteome</keyword>
<keyword id="KW-0808">Transferase</keyword>
<keyword id="KW-0812">Transmembrane</keyword>
<keyword id="KW-1133">Transmembrane helix</keyword>
<proteinExistence type="inferred from homology"/>
<dbReference type="EC" id="2.5.1.145" evidence="1"/>
<dbReference type="EMBL" id="AE004091">
    <property type="protein sequence ID" value="AAG03730.1"/>
    <property type="molecule type" value="Genomic_DNA"/>
</dbReference>
<dbReference type="PIR" id="C83602">
    <property type="entry name" value="C83602"/>
</dbReference>
<dbReference type="RefSeq" id="NP_249032.1">
    <property type="nucleotide sequence ID" value="NC_002516.2"/>
</dbReference>
<dbReference type="RefSeq" id="WP_003112963.1">
    <property type="nucleotide sequence ID" value="NZ_QZGE01000016.1"/>
</dbReference>
<dbReference type="SMR" id="Q9I6F2"/>
<dbReference type="FunCoup" id="Q9I6F2">
    <property type="interactions" value="418"/>
</dbReference>
<dbReference type="STRING" id="208964.PA0341"/>
<dbReference type="PaxDb" id="208964-PA0341"/>
<dbReference type="DNASU" id="882221"/>
<dbReference type="GeneID" id="882221"/>
<dbReference type="KEGG" id="pae:PA0341"/>
<dbReference type="PATRIC" id="fig|208964.12.peg.359"/>
<dbReference type="PseudoCAP" id="PA0341"/>
<dbReference type="HOGENOM" id="CLU_013386_1_0_6"/>
<dbReference type="InParanoid" id="Q9I6F2"/>
<dbReference type="OrthoDB" id="871140at2"/>
<dbReference type="PhylomeDB" id="Q9I6F2"/>
<dbReference type="BioCyc" id="PAER208964:G1FZ6-344-MONOMER"/>
<dbReference type="UniPathway" id="UPA00664"/>
<dbReference type="Proteomes" id="UP000002438">
    <property type="component" value="Chromosome"/>
</dbReference>
<dbReference type="GO" id="GO:0005886">
    <property type="term" value="C:plasma membrane"/>
    <property type="evidence" value="ECO:0000318"/>
    <property type="project" value="GO_Central"/>
</dbReference>
<dbReference type="GO" id="GO:0008961">
    <property type="term" value="F:phosphatidylglycerol-prolipoprotein diacylglyceryl transferase activity"/>
    <property type="evidence" value="ECO:0000318"/>
    <property type="project" value="GO_Central"/>
</dbReference>
<dbReference type="GO" id="GO:0042158">
    <property type="term" value="P:lipoprotein biosynthetic process"/>
    <property type="evidence" value="ECO:0000318"/>
    <property type="project" value="GO_Central"/>
</dbReference>
<dbReference type="HAMAP" id="MF_01147">
    <property type="entry name" value="Lgt"/>
    <property type="match status" value="1"/>
</dbReference>
<dbReference type="InterPro" id="IPR001640">
    <property type="entry name" value="Lgt"/>
</dbReference>
<dbReference type="NCBIfam" id="TIGR00544">
    <property type="entry name" value="lgt"/>
    <property type="match status" value="1"/>
</dbReference>
<dbReference type="PANTHER" id="PTHR30589:SF0">
    <property type="entry name" value="PHOSPHATIDYLGLYCEROL--PROLIPOPROTEIN DIACYLGLYCERYL TRANSFERASE"/>
    <property type="match status" value="1"/>
</dbReference>
<dbReference type="PANTHER" id="PTHR30589">
    <property type="entry name" value="PROLIPOPROTEIN DIACYLGLYCERYL TRANSFERASE"/>
    <property type="match status" value="1"/>
</dbReference>
<dbReference type="Pfam" id="PF01790">
    <property type="entry name" value="LGT"/>
    <property type="match status" value="1"/>
</dbReference>
<dbReference type="PROSITE" id="PS01311">
    <property type="entry name" value="LGT"/>
    <property type="match status" value="1"/>
</dbReference>
<evidence type="ECO:0000255" key="1">
    <source>
        <dbReference type="HAMAP-Rule" id="MF_01147"/>
    </source>
</evidence>
<organism>
    <name type="scientific">Pseudomonas aeruginosa (strain ATCC 15692 / DSM 22644 / CIP 104116 / JCM 14847 / LMG 12228 / 1C / PRS 101 / PAO1)</name>
    <dbReference type="NCBI Taxonomy" id="208964"/>
    <lineage>
        <taxon>Bacteria</taxon>
        <taxon>Pseudomonadati</taxon>
        <taxon>Pseudomonadota</taxon>
        <taxon>Gammaproteobacteria</taxon>
        <taxon>Pseudomonadales</taxon>
        <taxon>Pseudomonadaceae</taxon>
        <taxon>Pseudomonas</taxon>
    </lineage>
</organism>
<feature type="chain" id="PRO_0000172654" description="Phosphatidylglycerol--prolipoprotein diacylglyceryl transferase">
    <location>
        <begin position="1"/>
        <end position="266"/>
    </location>
</feature>
<feature type="transmembrane region" description="Helical" evidence="1">
    <location>
        <begin position="10"/>
        <end position="30"/>
    </location>
</feature>
<feature type="transmembrane region" description="Helical" evidence="1">
    <location>
        <begin position="56"/>
        <end position="76"/>
    </location>
</feature>
<feature type="transmembrane region" description="Helical" evidence="1">
    <location>
        <begin position="92"/>
        <end position="112"/>
    </location>
</feature>
<feature type="transmembrane region" description="Helical" evidence="1">
    <location>
        <begin position="120"/>
        <end position="140"/>
    </location>
</feature>
<feature type="transmembrane region" description="Helical" evidence="1">
    <location>
        <begin position="171"/>
        <end position="191"/>
    </location>
</feature>
<feature type="transmembrane region" description="Helical" evidence="1">
    <location>
        <begin position="199"/>
        <end position="219"/>
    </location>
</feature>
<feature type="transmembrane region" description="Helical" evidence="1">
    <location>
        <begin position="233"/>
        <end position="253"/>
    </location>
</feature>
<feature type="binding site" evidence="1">
    <location>
        <position position="139"/>
    </location>
    <ligand>
        <name>a 1,2-diacyl-sn-glycero-3-phospho-(1'-sn-glycerol)</name>
        <dbReference type="ChEBI" id="CHEBI:64716"/>
    </ligand>
</feature>
<name>LGT_PSEAE</name>
<sequence length="266" mass="29848">MLTYPQIDPVALAIGPLKIHWYGLMYLIGIGGAWLLASRRMKRFDPTWTKERLSDLVFWVACGVILGGRLGYVLFYNLDEYIANPTLIFEVWKGGMSFHGGLLGVMLAVWWFGKRHGKSFFQLMDFIAPLVPIGLGAGRIGNFINSELWGKVSDVPWAMVFPNGGPLPRHPSQLYQFALEGVALFVILWLFTRKPRPTASVSGLFVLCYGIFRFVVEFVRVPDAQLGYLAWGWLTMGQVLCVPMVLAGIALMVWAYRRDAAQPKAA</sequence>